<evidence type="ECO:0000255" key="1">
    <source>
        <dbReference type="HAMAP-Rule" id="MF_01551"/>
    </source>
</evidence>
<reference key="1">
    <citation type="journal article" date="2009" name="J. Bacteriol.">
        <title>Genomic sequencing reveals regulatory mutations and recombinational events in the widely used MC4100 lineage of Escherichia coli K-12.</title>
        <authorList>
            <person name="Ferenci T."/>
            <person name="Zhou Z."/>
            <person name="Betteridge T."/>
            <person name="Ren Y."/>
            <person name="Liu Y."/>
            <person name="Feng L."/>
            <person name="Reeves P.R."/>
            <person name="Wang L."/>
        </authorList>
    </citation>
    <scope>NUCLEOTIDE SEQUENCE [LARGE SCALE GENOMIC DNA]</scope>
    <source>
        <strain>K12 / MC4100 / BW2952</strain>
    </source>
</reference>
<protein>
    <recommendedName>
        <fullName evidence="1">Ribosomal RNA large subunit methyltransferase M</fullName>
        <ecNumber evidence="1">2.1.1.186</ecNumber>
    </recommendedName>
    <alternativeName>
        <fullName evidence="1">23S rRNA (cytidine2498-2'-O)-methyltransferase</fullName>
    </alternativeName>
    <alternativeName>
        <fullName evidence="1">23S rRNA 2'-O-ribose methyltransferase RlmM</fullName>
    </alternativeName>
</protein>
<dbReference type="EC" id="2.1.1.186" evidence="1"/>
<dbReference type="EMBL" id="CP001396">
    <property type="protein sequence ID" value="ACR64663.1"/>
    <property type="molecule type" value="Genomic_DNA"/>
</dbReference>
<dbReference type="RefSeq" id="WP_001045520.1">
    <property type="nucleotide sequence ID" value="NC_012759.1"/>
</dbReference>
<dbReference type="SMR" id="C4ZZW1"/>
<dbReference type="GeneID" id="75203803"/>
<dbReference type="KEGG" id="ebw:BWG_2544"/>
<dbReference type="HOGENOM" id="CLU_043780_0_0_6"/>
<dbReference type="GO" id="GO:0005737">
    <property type="term" value="C:cytoplasm"/>
    <property type="evidence" value="ECO:0007669"/>
    <property type="project" value="UniProtKB-SubCell"/>
</dbReference>
<dbReference type="GO" id="GO:0008757">
    <property type="term" value="F:S-adenosylmethionine-dependent methyltransferase activity"/>
    <property type="evidence" value="ECO:0007669"/>
    <property type="project" value="UniProtKB-UniRule"/>
</dbReference>
<dbReference type="GO" id="GO:0032259">
    <property type="term" value="P:methylation"/>
    <property type="evidence" value="ECO:0007669"/>
    <property type="project" value="UniProtKB-KW"/>
</dbReference>
<dbReference type="GO" id="GO:0006364">
    <property type="term" value="P:rRNA processing"/>
    <property type="evidence" value="ECO:0007669"/>
    <property type="project" value="UniProtKB-UniRule"/>
</dbReference>
<dbReference type="FunFam" id="3.30.2300.20:FF:000001">
    <property type="entry name" value="Ribosomal RNA large subunit methyltransferase M"/>
    <property type="match status" value="1"/>
</dbReference>
<dbReference type="FunFam" id="3.30.70.2810:FF:000001">
    <property type="entry name" value="Ribosomal RNA large subunit methyltransferase M"/>
    <property type="match status" value="1"/>
</dbReference>
<dbReference type="FunFam" id="3.40.50.150:FF:000020">
    <property type="entry name" value="Ribosomal RNA large subunit methyltransferase M"/>
    <property type="match status" value="1"/>
</dbReference>
<dbReference type="Gene3D" id="3.30.2300.20">
    <property type="match status" value="1"/>
</dbReference>
<dbReference type="Gene3D" id="3.30.70.2810">
    <property type="match status" value="1"/>
</dbReference>
<dbReference type="Gene3D" id="3.40.50.150">
    <property type="entry name" value="Vaccinia Virus protein VP39"/>
    <property type="match status" value="1"/>
</dbReference>
<dbReference type="HAMAP" id="MF_01551">
    <property type="entry name" value="23SrRNA_methyltr_M"/>
    <property type="match status" value="1"/>
</dbReference>
<dbReference type="InterPro" id="IPR040739">
    <property type="entry name" value="RlmM_FDX"/>
</dbReference>
<dbReference type="InterPro" id="IPR048646">
    <property type="entry name" value="RlmM_THUMP-like"/>
</dbReference>
<dbReference type="InterPro" id="IPR002877">
    <property type="entry name" value="RNA_MeTrfase_FtsJ_dom"/>
</dbReference>
<dbReference type="InterPro" id="IPR011224">
    <property type="entry name" value="rRNA_MeTrfase_M"/>
</dbReference>
<dbReference type="InterPro" id="IPR029063">
    <property type="entry name" value="SAM-dependent_MTases_sf"/>
</dbReference>
<dbReference type="NCBIfam" id="NF008734">
    <property type="entry name" value="PRK11760.1"/>
    <property type="match status" value="1"/>
</dbReference>
<dbReference type="PANTHER" id="PTHR37524">
    <property type="entry name" value="RIBOSOMAL RNA LARGE SUBUNIT METHYLTRANSFERASE M"/>
    <property type="match status" value="1"/>
</dbReference>
<dbReference type="PANTHER" id="PTHR37524:SF2">
    <property type="entry name" value="RIBOSOMAL RNA METHYLTRANSFERASE FTSJ DOMAIN-CONTAINING PROTEIN"/>
    <property type="match status" value="1"/>
</dbReference>
<dbReference type="Pfam" id="PF01728">
    <property type="entry name" value="FtsJ"/>
    <property type="match status" value="1"/>
</dbReference>
<dbReference type="Pfam" id="PF18125">
    <property type="entry name" value="RlmM_FDX"/>
    <property type="match status" value="1"/>
</dbReference>
<dbReference type="Pfam" id="PF21239">
    <property type="entry name" value="RLMM_N"/>
    <property type="match status" value="1"/>
</dbReference>
<dbReference type="PIRSF" id="PIRSF028774">
    <property type="entry name" value="UCP028774"/>
    <property type="match status" value="1"/>
</dbReference>
<dbReference type="SUPFAM" id="SSF53335">
    <property type="entry name" value="S-adenosyl-L-methionine-dependent methyltransferases"/>
    <property type="match status" value="1"/>
</dbReference>
<comment type="function">
    <text evidence="1">Catalyzes the 2'-O-methylation at nucleotide C2498 in 23S rRNA.</text>
</comment>
<comment type="catalytic activity">
    <reaction evidence="1">
        <text>cytidine(2498) in 23S rRNA + S-adenosyl-L-methionine = 2'-O-methylcytidine(2498) in 23S rRNA + S-adenosyl-L-homocysteine + H(+)</text>
        <dbReference type="Rhea" id="RHEA:42788"/>
        <dbReference type="Rhea" id="RHEA-COMP:10244"/>
        <dbReference type="Rhea" id="RHEA-COMP:10245"/>
        <dbReference type="ChEBI" id="CHEBI:15378"/>
        <dbReference type="ChEBI" id="CHEBI:57856"/>
        <dbReference type="ChEBI" id="CHEBI:59789"/>
        <dbReference type="ChEBI" id="CHEBI:74495"/>
        <dbReference type="ChEBI" id="CHEBI:82748"/>
        <dbReference type="EC" id="2.1.1.186"/>
    </reaction>
</comment>
<comment type="subunit">
    <text evidence="1">Monomer.</text>
</comment>
<comment type="subcellular location">
    <subcellularLocation>
        <location evidence="1">Cytoplasm</location>
    </subcellularLocation>
</comment>
<comment type="similarity">
    <text evidence="1">Belongs to the class I-like SAM-binding methyltransferase superfamily. RNA methyltransferase RlmE family. RlmM subfamily.</text>
</comment>
<name>RLMM_ECOBW</name>
<keyword id="KW-0963">Cytoplasm</keyword>
<keyword id="KW-0489">Methyltransferase</keyword>
<keyword id="KW-0698">rRNA processing</keyword>
<keyword id="KW-0949">S-adenosyl-L-methionine</keyword>
<keyword id="KW-0808">Transferase</keyword>
<organism>
    <name type="scientific">Escherichia coli (strain K12 / MC4100 / BW2952)</name>
    <dbReference type="NCBI Taxonomy" id="595496"/>
    <lineage>
        <taxon>Bacteria</taxon>
        <taxon>Pseudomonadati</taxon>
        <taxon>Pseudomonadota</taxon>
        <taxon>Gammaproteobacteria</taxon>
        <taxon>Enterobacterales</taxon>
        <taxon>Enterobacteriaceae</taxon>
        <taxon>Escherichia</taxon>
    </lineage>
</organism>
<feature type="chain" id="PRO_1000215468" description="Ribosomal RNA large subunit methyltransferase M">
    <location>
        <begin position="1"/>
        <end position="366"/>
    </location>
</feature>
<feature type="active site" description="Proton acceptor" evidence="1">
    <location>
        <position position="306"/>
    </location>
</feature>
<feature type="binding site" evidence="1">
    <location>
        <position position="188"/>
    </location>
    <ligand>
        <name>S-adenosyl-L-methionine</name>
        <dbReference type="ChEBI" id="CHEBI:59789"/>
    </ligand>
</feature>
<feature type="binding site" evidence="1">
    <location>
        <begin position="221"/>
        <end position="224"/>
    </location>
    <ligand>
        <name>S-adenosyl-L-methionine</name>
        <dbReference type="ChEBI" id="CHEBI:59789"/>
    </ligand>
</feature>
<feature type="binding site" evidence="1">
    <location>
        <position position="240"/>
    </location>
    <ligand>
        <name>S-adenosyl-L-methionine</name>
        <dbReference type="ChEBI" id="CHEBI:59789"/>
    </ligand>
</feature>
<feature type="binding site" evidence="1">
    <location>
        <position position="260"/>
    </location>
    <ligand>
        <name>S-adenosyl-L-methionine</name>
        <dbReference type="ChEBI" id="CHEBI:59789"/>
    </ligand>
</feature>
<feature type="binding site" evidence="1">
    <location>
        <position position="277"/>
    </location>
    <ligand>
        <name>S-adenosyl-L-methionine</name>
        <dbReference type="ChEBI" id="CHEBI:59789"/>
    </ligand>
</feature>
<gene>
    <name evidence="1" type="primary">rlmM</name>
    <name type="ordered locus">BWG_2544</name>
</gene>
<sequence length="366" mass="41905">MNKVVLLCRPGFEKECAAEITDKAGQREIFGFARVKENAGYVIYECYQPDDGDKLIRELPFSSLIFARQWFVVGELLQHLPPEDRITPIVGMLQGVVEKGGELRVEVADTNESKELLKFCRKFTVPLRAALRDAGVLANYETPKRPVVHVFFIAPGCCYTGYSYSNNNSPFYMGIPRLKFPADAPSRSTLKLEEAFHVFIPADEWDERLANGMWAVDLGACPGGWTYQLVKRNMWVYSVDNGPMAQSLMDTGQVTWLREDGFKFRPTRSNISWMVCDMVEKPAKVAALMAQWLVNGWCRETIFNLKLPMKKRYEEVSHNLAYIQAQLDEHGINAQIQARQLYHDREEVTVHVRRIWAAVGGRRDER</sequence>
<proteinExistence type="inferred from homology"/>
<accession>C4ZZW1</accession>